<name>CYSC_ENT38</name>
<keyword id="KW-0067">ATP-binding</keyword>
<keyword id="KW-0418">Kinase</keyword>
<keyword id="KW-0547">Nucleotide-binding</keyword>
<keyword id="KW-0597">Phosphoprotein</keyword>
<keyword id="KW-0808">Transferase</keyword>
<reference key="1">
    <citation type="journal article" date="2010" name="PLoS Genet.">
        <title>Genome sequence of the plant growth promoting endophytic bacterium Enterobacter sp. 638.</title>
        <authorList>
            <person name="Taghavi S."/>
            <person name="van der Lelie D."/>
            <person name="Hoffman A."/>
            <person name="Zhang Y.B."/>
            <person name="Walla M.D."/>
            <person name="Vangronsveld J."/>
            <person name="Newman L."/>
            <person name="Monchy S."/>
        </authorList>
    </citation>
    <scope>NUCLEOTIDE SEQUENCE [LARGE SCALE GENOMIC DNA]</scope>
    <source>
        <strain>638</strain>
    </source>
</reference>
<dbReference type="EC" id="2.7.1.25" evidence="1"/>
<dbReference type="EMBL" id="CP000653">
    <property type="protein sequence ID" value="ABP61885.1"/>
    <property type="molecule type" value="Genomic_DNA"/>
</dbReference>
<dbReference type="RefSeq" id="WP_015960214.1">
    <property type="nucleotide sequence ID" value="NC_009436.1"/>
</dbReference>
<dbReference type="SMR" id="A4WDV5"/>
<dbReference type="STRING" id="399742.Ent638_3221"/>
<dbReference type="KEGG" id="ent:Ent638_3221"/>
<dbReference type="eggNOG" id="COG0529">
    <property type="taxonomic scope" value="Bacteria"/>
</dbReference>
<dbReference type="HOGENOM" id="CLU_046932_1_0_6"/>
<dbReference type="OrthoDB" id="9804504at2"/>
<dbReference type="UniPathway" id="UPA00140">
    <property type="reaction ID" value="UER00205"/>
</dbReference>
<dbReference type="Proteomes" id="UP000000230">
    <property type="component" value="Chromosome"/>
</dbReference>
<dbReference type="GO" id="GO:0004020">
    <property type="term" value="F:adenylylsulfate kinase activity"/>
    <property type="evidence" value="ECO:0007669"/>
    <property type="project" value="UniProtKB-UniRule"/>
</dbReference>
<dbReference type="GO" id="GO:0005524">
    <property type="term" value="F:ATP binding"/>
    <property type="evidence" value="ECO:0007669"/>
    <property type="project" value="UniProtKB-UniRule"/>
</dbReference>
<dbReference type="GO" id="GO:0070814">
    <property type="term" value="P:hydrogen sulfide biosynthetic process"/>
    <property type="evidence" value="ECO:0007669"/>
    <property type="project" value="UniProtKB-UniRule"/>
</dbReference>
<dbReference type="GO" id="GO:0000103">
    <property type="term" value="P:sulfate assimilation"/>
    <property type="evidence" value="ECO:0007669"/>
    <property type="project" value="UniProtKB-UniRule"/>
</dbReference>
<dbReference type="CDD" id="cd02027">
    <property type="entry name" value="APSK"/>
    <property type="match status" value="1"/>
</dbReference>
<dbReference type="FunFam" id="3.40.50.300:FF:000212">
    <property type="entry name" value="Adenylyl-sulfate kinase"/>
    <property type="match status" value="1"/>
</dbReference>
<dbReference type="Gene3D" id="3.40.50.300">
    <property type="entry name" value="P-loop containing nucleotide triphosphate hydrolases"/>
    <property type="match status" value="1"/>
</dbReference>
<dbReference type="HAMAP" id="MF_00065">
    <property type="entry name" value="Adenylyl_sulf_kinase"/>
    <property type="match status" value="1"/>
</dbReference>
<dbReference type="InterPro" id="IPR002891">
    <property type="entry name" value="APS_kinase"/>
</dbReference>
<dbReference type="InterPro" id="IPR027417">
    <property type="entry name" value="P-loop_NTPase"/>
</dbReference>
<dbReference type="NCBIfam" id="TIGR00455">
    <property type="entry name" value="apsK"/>
    <property type="match status" value="1"/>
</dbReference>
<dbReference type="NCBIfam" id="NF003013">
    <property type="entry name" value="PRK03846.1"/>
    <property type="match status" value="1"/>
</dbReference>
<dbReference type="PANTHER" id="PTHR11055:SF63">
    <property type="entry name" value="ADENYLYL-SULFATE KINASE 1, CHLOROPLASTIC"/>
    <property type="match status" value="1"/>
</dbReference>
<dbReference type="PANTHER" id="PTHR11055">
    <property type="entry name" value="BIFUNCTIONAL 3'-PHOSPHOADENOSINE 5'-PHOSPHOSULFATE SYNTHASE"/>
    <property type="match status" value="1"/>
</dbReference>
<dbReference type="Pfam" id="PF01583">
    <property type="entry name" value="APS_kinase"/>
    <property type="match status" value="1"/>
</dbReference>
<dbReference type="SUPFAM" id="SSF52540">
    <property type="entry name" value="P-loop containing nucleoside triphosphate hydrolases"/>
    <property type="match status" value="1"/>
</dbReference>
<evidence type="ECO:0000255" key="1">
    <source>
        <dbReference type="HAMAP-Rule" id="MF_00065"/>
    </source>
</evidence>
<protein>
    <recommendedName>
        <fullName evidence="1">Adenylyl-sulfate kinase</fullName>
        <ecNumber evidence="1">2.7.1.25</ecNumber>
    </recommendedName>
    <alternativeName>
        <fullName evidence="1">APS kinase</fullName>
    </alternativeName>
    <alternativeName>
        <fullName evidence="1">ATP adenosine-5'-phosphosulfate 3'-phosphotransferase</fullName>
    </alternativeName>
    <alternativeName>
        <fullName evidence="1">Adenosine-5'-phosphosulfate kinase</fullName>
    </alternativeName>
</protein>
<gene>
    <name evidence="1" type="primary">cysC</name>
    <name type="ordered locus">Ent638_3221</name>
</gene>
<sequence>MAQHDENVVWHPHPVTVAQREQLHGHRGVVLWFTGLSGSGKSTVAGALEEALYQQGVSTYLLDGDNVRHGLCSDLGFSDDDRKENIRRVGEVASLMADAGLVVLTAFISPHRAERQMVRERVGHDRFIEVFVDTPLAICETRDPKGLYKKARAGELKNFTGIDAVYEAPESPQIHLDGQQLVTNLVSQLLDLLRQDDIIRS</sequence>
<organism>
    <name type="scientific">Enterobacter sp. (strain 638)</name>
    <dbReference type="NCBI Taxonomy" id="399742"/>
    <lineage>
        <taxon>Bacteria</taxon>
        <taxon>Pseudomonadati</taxon>
        <taxon>Pseudomonadota</taxon>
        <taxon>Gammaproteobacteria</taxon>
        <taxon>Enterobacterales</taxon>
        <taxon>Enterobacteriaceae</taxon>
        <taxon>Enterobacter</taxon>
    </lineage>
</organism>
<proteinExistence type="inferred from homology"/>
<feature type="chain" id="PRO_1000057444" description="Adenylyl-sulfate kinase">
    <location>
        <begin position="1"/>
        <end position="201"/>
    </location>
</feature>
<feature type="active site" description="Phosphoserine intermediate" evidence="1">
    <location>
        <position position="109"/>
    </location>
</feature>
<feature type="binding site" evidence="1">
    <location>
        <begin position="35"/>
        <end position="42"/>
    </location>
    <ligand>
        <name>ATP</name>
        <dbReference type="ChEBI" id="CHEBI:30616"/>
    </ligand>
</feature>
<comment type="function">
    <text evidence="1">Catalyzes the synthesis of activated sulfate.</text>
</comment>
<comment type="catalytic activity">
    <reaction evidence="1">
        <text>adenosine 5'-phosphosulfate + ATP = 3'-phosphoadenylyl sulfate + ADP + H(+)</text>
        <dbReference type="Rhea" id="RHEA:24152"/>
        <dbReference type="ChEBI" id="CHEBI:15378"/>
        <dbReference type="ChEBI" id="CHEBI:30616"/>
        <dbReference type="ChEBI" id="CHEBI:58243"/>
        <dbReference type="ChEBI" id="CHEBI:58339"/>
        <dbReference type="ChEBI" id="CHEBI:456216"/>
        <dbReference type="EC" id="2.7.1.25"/>
    </reaction>
</comment>
<comment type="pathway">
    <text evidence="1">Sulfur metabolism; hydrogen sulfide biosynthesis; sulfite from sulfate: step 2/3.</text>
</comment>
<comment type="similarity">
    <text evidence="1">Belongs to the APS kinase family.</text>
</comment>
<accession>A4WDV5</accession>